<protein>
    <recommendedName>
        <fullName>Trypsin inhibitor 2</fullName>
    </recommendedName>
    <alternativeName>
        <fullName>MCTI-A</fullName>
    </alternativeName>
    <alternativeName>
        <fullName>MCTI-II</fullName>
    </alternativeName>
    <alternativeName>
        <fullName>Trypsin inhibitor II</fullName>
    </alternativeName>
</protein>
<organism>
    <name type="scientific">Momordica charantia</name>
    <name type="common">Bitter gourd</name>
    <name type="synonym">Balsam pear</name>
    <dbReference type="NCBI Taxonomy" id="3673"/>
    <lineage>
        <taxon>Eukaryota</taxon>
        <taxon>Viridiplantae</taxon>
        <taxon>Streptophyta</taxon>
        <taxon>Embryophyta</taxon>
        <taxon>Tracheophyta</taxon>
        <taxon>Spermatophyta</taxon>
        <taxon>Magnoliopsida</taxon>
        <taxon>eudicotyledons</taxon>
        <taxon>Gunneridae</taxon>
        <taxon>Pentapetalae</taxon>
        <taxon>rosids</taxon>
        <taxon>fabids</taxon>
        <taxon>Cucurbitales</taxon>
        <taxon>Cucurbitaceae</taxon>
        <taxon>Momordiceae</taxon>
        <taxon>Momordica</taxon>
    </lineage>
</organism>
<accession>P10295</accession>
<reference key="1">
    <citation type="journal article" date="1989" name="J. Biochem.">
        <title>Amino acid sequences and disulfide bridges of serine proteinase inhibitors from bitter gourd (Momordica charantia LINN.) seeds.</title>
        <authorList>
            <person name="Hara S."/>
            <person name="Makino J."/>
            <person name="Ikenaka T."/>
        </authorList>
    </citation>
    <scope>PROTEIN SEQUENCE</scope>
    <scope>DOMAIN</scope>
    <scope>DISULFIDE BONDS</scope>
    <source>
        <tissue>Seed</tissue>
    </source>
</reference>
<reference key="2">
    <citation type="journal article" date="1993" name="J. Mol. Biol.">
        <title>Refined 1.6-A resolution crystal structure of the complex formed between porcine beta-trypsin and MCTI-A, a trypsin inhibitor of the squash family. Detailed comparison with bovine beta-trypsin and its complex.</title>
        <authorList>
            <person name="Huang Q."/>
            <person name="Liu S."/>
            <person name="Tang Y."/>
        </authorList>
    </citation>
    <scope>X-RAY CRYSTALLOGRAPHY (1.6 ANGSTROMS)</scope>
</reference>
<reference key="3">
    <citation type="journal article" date="1992" name="FEBS Lett.">
        <title>Amino acid sequencing of a trypsin inhibitor by refined 1.6 A X-ray crystal structure of its complex with porcine beta-trypsin.</title>
        <authorList>
            <person name="Huang Q."/>
            <person name="Liu S."/>
            <person name="Tang Y."/>
            <person name="Zeng F."/>
            <person name="Qian R."/>
        </authorList>
    </citation>
    <scope>X-RAY CRYSTALLOGRAPHY (1.6 ANGSTROMS)</scope>
</reference>
<proteinExistence type="evidence at protein level"/>
<comment type="function">
    <text>Inhibits trypsin.</text>
</comment>
<comment type="subcellular location">
    <subcellularLocation>
        <location>Secreted</location>
    </subcellularLocation>
</comment>
<comment type="domain">
    <text evidence="1">The presence of a 'disulfide through disulfide knot' structurally defines this protein as a knottin.</text>
</comment>
<comment type="similarity">
    <text evidence="2">Belongs to the protease inhibitor I7 (squash-type serine protease inhibitor) family.</text>
</comment>
<sequence>RICPRIWMECKRDSDCMAQCICVDGHCG</sequence>
<keyword id="KW-0002">3D-structure</keyword>
<keyword id="KW-0903">Direct protein sequencing</keyword>
<keyword id="KW-1015">Disulfide bond</keyword>
<keyword id="KW-0960">Knottin</keyword>
<keyword id="KW-0646">Protease inhibitor</keyword>
<keyword id="KW-1185">Reference proteome</keyword>
<keyword id="KW-0964">Secreted</keyword>
<keyword id="KW-0722">Serine protease inhibitor</keyword>
<feature type="peptide" id="PRO_0000044387" description="Trypsin inhibitor 2">
    <location>
        <begin position="1"/>
        <end position="28"/>
    </location>
</feature>
<feature type="site" description="Reactive bond">
    <location>
        <begin position="5"/>
        <end position="6"/>
    </location>
</feature>
<feature type="disulfide bond" evidence="1">
    <location>
        <begin position="3"/>
        <end position="20"/>
    </location>
</feature>
<feature type="disulfide bond" evidence="1">
    <location>
        <begin position="10"/>
        <end position="22"/>
    </location>
</feature>
<feature type="disulfide bond" evidence="1">
    <location>
        <begin position="16"/>
        <end position="27"/>
    </location>
</feature>
<feature type="helix" evidence="3">
    <location>
        <begin position="13"/>
        <end position="15"/>
    </location>
</feature>
<dbReference type="PIR" id="JC2507">
    <property type="entry name" value="JC2507"/>
</dbReference>
<dbReference type="PIR" id="JX0058">
    <property type="entry name" value="JX0058"/>
</dbReference>
<dbReference type="PDB" id="1F2S">
    <property type="method" value="X-ray"/>
    <property type="resolution" value="1.79 A"/>
    <property type="chains" value="I=1-28"/>
</dbReference>
<dbReference type="PDBsum" id="1F2S"/>
<dbReference type="SMR" id="P10295"/>
<dbReference type="MINT" id="P10295"/>
<dbReference type="MEROPS" id="I07.008"/>
<dbReference type="EvolutionaryTrace" id="P10295"/>
<dbReference type="Proteomes" id="UP000504603">
    <property type="component" value="Unplaced"/>
</dbReference>
<dbReference type="GO" id="GO:0005576">
    <property type="term" value="C:extracellular region"/>
    <property type="evidence" value="ECO:0007669"/>
    <property type="project" value="UniProtKB-SubCell"/>
</dbReference>
<dbReference type="GO" id="GO:0004867">
    <property type="term" value="F:serine-type endopeptidase inhibitor activity"/>
    <property type="evidence" value="ECO:0007669"/>
    <property type="project" value="UniProtKB-KW"/>
</dbReference>
<dbReference type="CDD" id="cd00150">
    <property type="entry name" value="PlantTI"/>
    <property type="match status" value="1"/>
</dbReference>
<dbReference type="Gene3D" id="4.10.75.20">
    <property type="match status" value="1"/>
</dbReference>
<dbReference type="InterPro" id="IPR000737">
    <property type="entry name" value="Prot_inh_squash"/>
</dbReference>
<dbReference type="InterPro" id="IPR011052">
    <property type="entry name" value="Proteinase_amylase_inhib_sf"/>
</dbReference>
<dbReference type="Pfam" id="PF00299">
    <property type="entry name" value="Squash"/>
    <property type="match status" value="1"/>
</dbReference>
<dbReference type="PRINTS" id="PR00293">
    <property type="entry name" value="SQUASHINHBTR"/>
</dbReference>
<dbReference type="SMART" id="SM00286">
    <property type="entry name" value="PTI"/>
    <property type="match status" value="1"/>
</dbReference>
<dbReference type="SUPFAM" id="SSF57027">
    <property type="entry name" value="Plant inhibitors of proteinases and amylases"/>
    <property type="match status" value="1"/>
</dbReference>
<dbReference type="PROSITE" id="PS00286">
    <property type="entry name" value="SQUASH_INHIBITOR"/>
    <property type="match status" value="1"/>
</dbReference>
<name>ITR2_MOMCH</name>
<evidence type="ECO:0000269" key="1">
    <source>
    </source>
</evidence>
<evidence type="ECO:0000305" key="2"/>
<evidence type="ECO:0007829" key="3">
    <source>
        <dbReference type="PDB" id="1F2S"/>
    </source>
</evidence>